<name>TAUB_BURTA</name>
<evidence type="ECO:0000255" key="1">
    <source>
        <dbReference type="HAMAP-Rule" id="MF_01714"/>
    </source>
</evidence>
<dbReference type="EC" id="7.6.2.7" evidence="1"/>
<dbReference type="EMBL" id="CP000085">
    <property type="protein sequence ID" value="ABC33989.1"/>
    <property type="molecule type" value="Genomic_DNA"/>
</dbReference>
<dbReference type="RefSeq" id="WP_009896069.1">
    <property type="nucleotide sequence ID" value="NZ_CP008786.1"/>
</dbReference>
<dbReference type="SMR" id="Q2T751"/>
<dbReference type="GeneID" id="45118279"/>
<dbReference type="KEGG" id="bte:BTH_II0801"/>
<dbReference type="HOGENOM" id="CLU_000604_1_22_4"/>
<dbReference type="Proteomes" id="UP000001930">
    <property type="component" value="Chromosome II"/>
</dbReference>
<dbReference type="GO" id="GO:0005886">
    <property type="term" value="C:plasma membrane"/>
    <property type="evidence" value="ECO:0007669"/>
    <property type="project" value="UniProtKB-SubCell"/>
</dbReference>
<dbReference type="GO" id="GO:0015411">
    <property type="term" value="F:ABC-type taurine transporter transporter activity"/>
    <property type="evidence" value="ECO:0007669"/>
    <property type="project" value="UniProtKB-EC"/>
</dbReference>
<dbReference type="GO" id="GO:0005524">
    <property type="term" value="F:ATP binding"/>
    <property type="evidence" value="ECO:0007669"/>
    <property type="project" value="UniProtKB-KW"/>
</dbReference>
<dbReference type="GO" id="GO:0016887">
    <property type="term" value="F:ATP hydrolysis activity"/>
    <property type="evidence" value="ECO:0007669"/>
    <property type="project" value="InterPro"/>
</dbReference>
<dbReference type="CDD" id="cd03293">
    <property type="entry name" value="ABC_NrtD_SsuB_transporters"/>
    <property type="match status" value="1"/>
</dbReference>
<dbReference type="Gene3D" id="3.40.50.300">
    <property type="entry name" value="P-loop containing nucleotide triphosphate hydrolases"/>
    <property type="match status" value="1"/>
</dbReference>
<dbReference type="InterPro" id="IPR003593">
    <property type="entry name" value="AAA+_ATPase"/>
</dbReference>
<dbReference type="InterPro" id="IPR003439">
    <property type="entry name" value="ABC_transporter-like_ATP-bd"/>
</dbReference>
<dbReference type="InterPro" id="IPR017871">
    <property type="entry name" value="ABC_transporter-like_CS"/>
</dbReference>
<dbReference type="InterPro" id="IPR050166">
    <property type="entry name" value="ABC_transporter_ATP-bind"/>
</dbReference>
<dbReference type="InterPro" id="IPR027417">
    <property type="entry name" value="P-loop_NTPase"/>
</dbReference>
<dbReference type="PANTHER" id="PTHR42788:SF18">
    <property type="entry name" value="TAURINE IMPORT ATP-BINDING PROTEIN TAUB"/>
    <property type="match status" value="1"/>
</dbReference>
<dbReference type="PANTHER" id="PTHR42788">
    <property type="entry name" value="TAURINE IMPORT ATP-BINDING PROTEIN-RELATED"/>
    <property type="match status" value="1"/>
</dbReference>
<dbReference type="Pfam" id="PF00005">
    <property type="entry name" value="ABC_tran"/>
    <property type="match status" value="1"/>
</dbReference>
<dbReference type="SMART" id="SM00382">
    <property type="entry name" value="AAA"/>
    <property type="match status" value="1"/>
</dbReference>
<dbReference type="SUPFAM" id="SSF52540">
    <property type="entry name" value="P-loop containing nucleoside triphosphate hydrolases"/>
    <property type="match status" value="1"/>
</dbReference>
<dbReference type="PROSITE" id="PS00211">
    <property type="entry name" value="ABC_TRANSPORTER_1"/>
    <property type="match status" value="1"/>
</dbReference>
<dbReference type="PROSITE" id="PS50893">
    <property type="entry name" value="ABC_TRANSPORTER_2"/>
    <property type="match status" value="1"/>
</dbReference>
<dbReference type="PROSITE" id="PS51250">
    <property type="entry name" value="TAUB"/>
    <property type="match status" value="1"/>
</dbReference>
<reference key="1">
    <citation type="journal article" date="2005" name="BMC Genomics">
        <title>Bacterial genome adaptation to niches: divergence of the potential virulence genes in three Burkholderia species of different survival strategies.</title>
        <authorList>
            <person name="Kim H.S."/>
            <person name="Schell M.A."/>
            <person name="Yu Y."/>
            <person name="Ulrich R.L."/>
            <person name="Sarria S.H."/>
            <person name="Nierman W.C."/>
            <person name="DeShazer D."/>
        </authorList>
    </citation>
    <scope>NUCLEOTIDE SEQUENCE [LARGE SCALE GENOMIC DNA]</scope>
    <source>
        <strain>ATCC 700388 / DSM 13276 / CCUG 48851 / CIP 106301 / E264</strain>
    </source>
</reference>
<feature type="chain" id="PRO_0000275825" description="Taurine import ATP-binding protein TauB">
    <location>
        <begin position="1"/>
        <end position="260"/>
    </location>
</feature>
<feature type="domain" description="ABC transporter" evidence="1">
    <location>
        <begin position="6"/>
        <end position="235"/>
    </location>
</feature>
<feature type="binding site" evidence="1">
    <location>
        <begin position="40"/>
        <end position="47"/>
    </location>
    <ligand>
        <name>ATP</name>
        <dbReference type="ChEBI" id="CHEBI:30616"/>
    </ligand>
</feature>
<gene>
    <name evidence="1" type="primary">tauB</name>
    <name type="ordered locus">BTH_II0801</name>
</gene>
<protein>
    <recommendedName>
        <fullName evidence="1">Taurine import ATP-binding protein TauB</fullName>
        <ecNumber evidence="1">7.6.2.7</ecNumber>
    </recommendedName>
</protein>
<keyword id="KW-0067">ATP-binding</keyword>
<keyword id="KW-0997">Cell inner membrane</keyword>
<keyword id="KW-1003">Cell membrane</keyword>
<keyword id="KW-0472">Membrane</keyword>
<keyword id="KW-0547">Nucleotide-binding</keyword>
<keyword id="KW-1278">Translocase</keyword>
<keyword id="KW-0813">Transport</keyword>
<sequence length="260" mass="28104">MAKLCAHQVSVVYASRRGALTALENVSMSVGGNEIVVALGASGCGKSTLLSLLAGFQPPTSGRVSVDGAPVTGPGADRGVVFQDDALMPWLNVIDNVAFGLRMQGVGRDARNARARDVLRLVKLAGFEQHRIDEISGGMRQRVGLARALAADPSFLLMDEPLGALDALTREHMQTLLLDVWRETGKGVFLITHSVEEAVLLATELLILSPRPGRIVARHSLDFARRYAAGESMRSIKSDPRFTEIHLALVEQLMRETEEV</sequence>
<accession>Q2T751</accession>
<comment type="function">
    <text evidence="1">Part of the ABC transporter complex TauABC involved in taurine import. Responsible for energy coupling to the transport system.</text>
</comment>
<comment type="catalytic activity">
    <reaction evidence="1">
        <text>taurine(out) + ATP + H2O = taurine(in) + ADP + phosphate + H(+)</text>
        <dbReference type="Rhea" id="RHEA:14613"/>
        <dbReference type="ChEBI" id="CHEBI:15377"/>
        <dbReference type="ChEBI" id="CHEBI:15378"/>
        <dbReference type="ChEBI" id="CHEBI:30616"/>
        <dbReference type="ChEBI" id="CHEBI:43474"/>
        <dbReference type="ChEBI" id="CHEBI:456216"/>
        <dbReference type="ChEBI" id="CHEBI:507393"/>
        <dbReference type="EC" id="7.6.2.7"/>
    </reaction>
</comment>
<comment type="subunit">
    <text evidence="1">The complex is composed of two ATP-binding proteins (TauB), two transmembrane proteins (TauC) and a solute-binding protein (TauA).</text>
</comment>
<comment type="subcellular location">
    <subcellularLocation>
        <location evidence="1">Cell inner membrane</location>
        <topology evidence="1">Peripheral membrane protein</topology>
    </subcellularLocation>
</comment>
<comment type="similarity">
    <text evidence="1">Belongs to the ABC transporter superfamily. Taurine importer (TC 3.A.1.17.1) family.</text>
</comment>
<organism>
    <name type="scientific">Burkholderia thailandensis (strain ATCC 700388 / DSM 13276 / CCUG 48851 / CIP 106301 / E264)</name>
    <dbReference type="NCBI Taxonomy" id="271848"/>
    <lineage>
        <taxon>Bacteria</taxon>
        <taxon>Pseudomonadati</taxon>
        <taxon>Pseudomonadota</taxon>
        <taxon>Betaproteobacteria</taxon>
        <taxon>Burkholderiales</taxon>
        <taxon>Burkholderiaceae</taxon>
        <taxon>Burkholderia</taxon>
        <taxon>pseudomallei group</taxon>
    </lineage>
</organism>
<proteinExistence type="inferred from homology"/>